<keyword id="KW-0025">Alternative splicing</keyword>
<keyword id="KW-0175">Coiled coil</keyword>
<keyword id="KW-1017">Isopeptide bond</keyword>
<keyword id="KW-0597">Phosphoprotein</keyword>
<keyword id="KW-1185">Reference proteome</keyword>
<keyword id="KW-0832">Ubl conjugation</keyword>
<accession>Q9CR29</accession>
<accession>Q6PDT2</accession>
<organism>
    <name type="scientific">Mus musculus</name>
    <name type="common">Mouse</name>
    <dbReference type="NCBI Taxonomy" id="10090"/>
    <lineage>
        <taxon>Eukaryota</taxon>
        <taxon>Metazoa</taxon>
        <taxon>Chordata</taxon>
        <taxon>Craniata</taxon>
        <taxon>Vertebrata</taxon>
        <taxon>Euteleostomi</taxon>
        <taxon>Mammalia</taxon>
        <taxon>Eutheria</taxon>
        <taxon>Euarchontoglires</taxon>
        <taxon>Glires</taxon>
        <taxon>Rodentia</taxon>
        <taxon>Myomorpha</taxon>
        <taxon>Muroidea</taxon>
        <taxon>Muridae</taxon>
        <taxon>Murinae</taxon>
        <taxon>Mus</taxon>
        <taxon>Mus</taxon>
    </lineage>
</organism>
<feature type="chain" id="PRO_0000234501" description="Coiled-coil domain-containing protein 43">
    <location>
        <begin position="1"/>
        <end position="222"/>
    </location>
</feature>
<feature type="region of interest" description="Disordered" evidence="3">
    <location>
        <begin position="136"/>
        <end position="222"/>
    </location>
</feature>
<feature type="coiled-coil region" evidence="2">
    <location>
        <begin position="119"/>
        <end position="143"/>
    </location>
</feature>
<feature type="coiled-coil region" evidence="2">
    <location>
        <begin position="175"/>
        <end position="217"/>
    </location>
</feature>
<feature type="compositionally biased region" description="Polar residues" evidence="3">
    <location>
        <begin position="152"/>
        <end position="168"/>
    </location>
</feature>
<feature type="compositionally biased region" description="Basic and acidic residues" evidence="3">
    <location>
        <begin position="172"/>
        <end position="209"/>
    </location>
</feature>
<feature type="compositionally biased region" description="Basic residues" evidence="3">
    <location>
        <begin position="210"/>
        <end position="222"/>
    </location>
</feature>
<feature type="modified residue" description="Phosphothreonine" evidence="6">
    <location>
        <position position="137"/>
    </location>
</feature>
<feature type="cross-link" description="Glycyl lysine isopeptide (Lys-Gly) (interchain with G-Cter in SUMO1)" evidence="1">
    <location>
        <position position="93"/>
    </location>
</feature>
<feature type="splice variant" id="VSP_018336" description="In isoform 2." evidence="4">
    <original>TLFRNTNVEDVLNARKLERDSL</original>
    <variation>SILLFVHPLCFSRSSW</variation>
    <location>
        <begin position="161"/>
        <end position="182"/>
    </location>
</feature>
<feature type="splice variant" id="VSP_018337" description="In isoform 2." evidence="4">
    <location>
        <begin position="183"/>
        <end position="222"/>
    </location>
</feature>
<gene>
    <name type="primary">Ccdc43</name>
    <name type="synonym">D11Ertd707e</name>
</gene>
<sequence length="222" mass="25049">MAAPSEVAAAVLGEGDGGAFGSWLDGRLEALGVDRAVYAAYILGVLQEEEEEEKLDALQGILSAFLEEESLLDICKEIVERWSETRDVTTKVKKEDEVQAIATLIEKQAQIVVKPRVVSEEEKQRKAALLAQYADVTDEEDEADKKDDAGASTANVSSDRTLFRNTNVEDVLNARKLERDSLRDESQRKKEQDKLQREKDKLAKQERKEKEKKRTQKGERKR</sequence>
<evidence type="ECO:0000250" key="1">
    <source>
        <dbReference type="UniProtKB" id="Q96MW1"/>
    </source>
</evidence>
<evidence type="ECO:0000255" key="2"/>
<evidence type="ECO:0000256" key="3">
    <source>
        <dbReference type="SAM" id="MobiDB-lite"/>
    </source>
</evidence>
<evidence type="ECO:0000303" key="4">
    <source>
    </source>
</evidence>
<evidence type="ECO:0000305" key="5"/>
<evidence type="ECO:0007744" key="6">
    <source>
    </source>
</evidence>
<reference key="1">
    <citation type="journal article" date="2005" name="Science">
        <title>The transcriptional landscape of the mammalian genome.</title>
        <authorList>
            <person name="Carninci P."/>
            <person name="Kasukawa T."/>
            <person name="Katayama S."/>
            <person name="Gough J."/>
            <person name="Frith M.C."/>
            <person name="Maeda N."/>
            <person name="Oyama R."/>
            <person name="Ravasi T."/>
            <person name="Lenhard B."/>
            <person name="Wells C."/>
            <person name="Kodzius R."/>
            <person name="Shimokawa K."/>
            <person name="Bajic V.B."/>
            <person name="Brenner S.E."/>
            <person name="Batalov S."/>
            <person name="Forrest A.R."/>
            <person name="Zavolan M."/>
            <person name="Davis M.J."/>
            <person name="Wilming L.G."/>
            <person name="Aidinis V."/>
            <person name="Allen J.E."/>
            <person name="Ambesi-Impiombato A."/>
            <person name="Apweiler R."/>
            <person name="Aturaliya R.N."/>
            <person name="Bailey T.L."/>
            <person name="Bansal M."/>
            <person name="Baxter L."/>
            <person name="Beisel K.W."/>
            <person name="Bersano T."/>
            <person name="Bono H."/>
            <person name="Chalk A.M."/>
            <person name="Chiu K.P."/>
            <person name="Choudhary V."/>
            <person name="Christoffels A."/>
            <person name="Clutterbuck D.R."/>
            <person name="Crowe M.L."/>
            <person name="Dalla E."/>
            <person name="Dalrymple B.P."/>
            <person name="de Bono B."/>
            <person name="Della Gatta G."/>
            <person name="di Bernardo D."/>
            <person name="Down T."/>
            <person name="Engstrom P."/>
            <person name="Fagiolini M."/>
            <person name="Faulkner G."/>
            <person name="Fletcher C.F."/>
            <person name="Fukushima T."/>
            <person name="Furuno M."/>
            <person name="Futaki S."/>
            <person name="Gariboldi M."/>
            <person name="Georgii-Hemming P."/>
            <person name="Gingeras T.R."/>
            <person name="Gojobori T."/>
            <person name="Green R.E."/>
            <person name="Gustincich S."/>
            <person name="Harbers M."/>
            <person name="Hayashi Y."/>
            <person name="Hensch T.K."/>
            <person name="Hirokawa N."/>
            <person name="Hill D."/>
            <person name="Huminiecki L."/>
            <person name="Iacono M."/>
            <person name="Ikeo K."/>
            <person name="Iwama A."/>
            <person name="Ishikawa T."/>
            <person name="Jakt M."/>
            <person name="Kanapin A."/>
            <person name="Katoh M."/>
            <person name="Kawasawa Y."/>
            <person name="Kelso J."/>
            <person name="Kitamura H."/>
            <person name="Kitano H."/>
            <person name="Kollias G."/>
            <person name="Krishnan S.P."/>
            <person name="Kruger A."/>
            <person name="Kummerfeld S.K."/>
            <person name="Kurochkin I.V."/>
            <person name="Lareau L.F."/>
            <person name="Lazarevic D."/>
            <person name="Lipovich L."/>
            <person name="Liu J."/>
            <person name="Liuni S."/>
            <person name="McWilliam S."/>
            <person name="Madan Babu M."/>
            <person name="Madera M."/>
            <person name="Marchionni L."/>
            <person name="Matsuda H."/>
            <person name="Matsuzawa S."/>
            <person name="Miki H."/>
            <person name="Mignone F."/>
            <person name="Miyake S."/>
            <person name="Morris K."/>
            <person name="Mottagui-Tabar S."/>
            <person name="Mulder N."/>
            <person name="Nakano N."/>
            <person name="Nakauchi H."/>
            <person name="Ng P."/>
            <person name="Nilsson R."/>
            <person name="Nishiguchi S."/>
            <person name="Nishikawa S."/>
            <person name="Nori F."/>
            <person name="Ohara O."/>
            <person name="Okazaki Y."/>
            <person name="Orlando V."/>
            <person name="Pang K.C."/>
            <person name="Pavan W.J."/>
            <person name="Pavesi G."/>
            <person name="Pesole G."/>
            <person name="Petrovsky N."/>
            <person name="Piazza S."/>
            <person name="Reed J."/>
            <person name="Reid J.F."/>
            <person name="Ring B.Z."/>
            <person name="Ringwald M."/>
            <person name="Rost B."/>
            <person name="Ruan Y."/>
            <person name="Salzberg S.L."/>
            <person name="Sandelin A."/>
            <person name="Schneider C."/>
            <person name="Schoenbach C."/>
            <person name="Sekiguchi K."/>
            <person name="Semple C.A."/>
            <person name="Seno S."/>
            <person name="Sessa L."/>
            <person name="Sheng Y."/>
            <person name="Shibata Y."/>
            <person name="Shimada H."/>
            <person name="Shimada K."/>
            <person name="Silva D."/>
            <person name="Sinclair B."/>
            <person name="Sperling S."/>
            <person name="Stupka E."/>
            <person name="Sugiura K."/>
            <person name="Sultana R."/>
            <person name="Takenaka Y."/>
            <person name="Taki K."/>
            <person name="Tammoja K."/>
            <person name="Tan S.L."/>
            <person name="Tang S."/>
            <person name="Taylor M.S."/>
            <person name="Tegner J."/>
            <person name="Teichmann S.A."/>
            <person name="Ueda H.R."/>
            <person name="van Nimwegen E."/>
            <person name="Verardo R."/>
            <person name="Wei C.L."/>
            <person name="Yagi K."/>
            <person name="Yamanishi H."/>
            <person name="Zabarovsky E."/>
            <person name="Zhu S."/>
            <person name="Zimmer A."/>
            <person name="Hide W."/>
            <person name="Bult C."/>
            <person name="Grimmond S.M."/>
            <person name="Teasdale R.D."/>
            <person name="Liu E.T."/>
            <person name="Brusic V."/>
            <person name="Quackenbush J."/>
            <person name="Wahlestedt C."/>
            <person name="Mattick J.S."/>
            <person name="Hume D.A."/>
            <person name="Kai C."/>
            <person name="Sasaki D."/>
            <person name="Tomaru Y."/>
            <person name="Fukuda S."/>
            <person name="Kanamori-Katayama M."/>
            <person name="Suzuki M."/>
            <person name="Aoki J."/>
            <person name="Arakawa T."/>
            <person name="Iida J."/>
            <person name="Imamura K."/>
            <person name="Itoh M."/>
            <person name="Kato T."/>
            <person name="Kawaji H."/>
            <person name="Kawagashira N."/>
            <person name="Kawashima T."/>
            <person name="Kojima M."/>
            <person name="Kondo S."/>
            <person name="Konno H."/>
            <person name="Nakano K."/>
            <person name="Ninomiya N."/>
            <person name="Nishio T."/>
            <person name="Okada M."/>
            <person name="Plessy C."/>
            <person name="Shibata K."/>
            <person name="Shiraki T."/>
            <person name="Suzuki S."/>
            <person name="Tagami M."/>
            <person name="Waki K."/>
            <person name="Watahiki A."/>
            <person name="Okamura-Oho Y."/>
            <person name="Suzuki H."/>
            <person name="Kawai J."/>
            <person name="Hayashizaki Y."/>
        </authorList>
    </citation>
    <scope>NUCLEOTIDE SEQUENCE [LARGE SCALE MRNA] (ISOFORM 1)</scope>
    <source>
        <strain>C57BL/6J</strain>
        <tissue>Embryo</tissue>
        <tissue>Skin</tissue>
        <tissue>Tongue</tissue>
    </source>
</reference>
<reference key="2">
    <citation type="journal article" date="2004" name="Genome Res.">
        <title>The status, quality, and expansion of the NIH full-length cDNA project: the Mammalian Gene Collection (MGC).</title>
        <authorList>
            <consortium name="The MGC Project Team"/>
        </authorList>
    </citation>
    <scope>NUCLEOTIDE SEQUENCE [LARGE SCALE MRNA] (ISOFORMS 1 AND 2)</scope>
    <source>
        <strain>C57BL/6J</strain>
        <tissue>Brain</tissue>
    </source>
</reference>
<reference key="3">
    <citation type="journal article" date="2007" name="Proc. Natl. Acad. Sci. U.S.A.">
        <title>Large-scale phosphorylation analysis of mouse liver.</title>
        <authorList>
            <person name="Villen J."/>
            <person name="Beausoleil S.A."/>
            <person name="Gerber S.A."/>
            <person name="Gygi S.P."/>
        </authorList>
    </citation>
    <scope>IDENTIFICATION BY MASS SPECTROMETRY [LARGE SCALE ANALYSIS]</scope>
    <source>
        <tissue>Liver</tissue>
    </source>
</reference>
<reference key="4">
    <citation type="journal article" date="2009" name="Mol. Cell. Proteomics">
        <title>Large scale localization of protein phosphorylation by use of electron capture dissociation mass spectrometry.</title>
        <authorList>
            <person name="Sweet S.M."/>
            <person name="Bailey C.M."/>
            <person name="Cunningham D.L."/>
            <person name="Heath J.K."/>
            <person name="Cooper H.J."/>
        </authorList>
    </citation>
    <scope>IDENTIFICATION BY MASS SPECTROMETRY [LARGE SCALE ANALYSIS]</scope>
    <source>
        <tissue>Embryonic fibroblast</tissue>
    </source>
</reference>
<reference key="5">
    <citation type="journal article" date="2010" name="Cell">
        <title>A tissue-specific atlas of mouse protein phosphorylation and expression.</title>
        <authorList>
            <person name="Huttlin E.L."/>
            <person name="Jedrychowski M.P."/>
            <person name="Elias J.E."/>
            <person name="Goswami T."/>
            <person name="Rad R."/>
            <person name="Beausoleil S.A."/>
            <person name="Villen J."/>
            <person name="Haas W."/>
            <person name="Sowa M.E."/>
            <person name="Gygi S.P."/>
        </authorList>
    </citation>
    <scope>PHOSPHORYLATION [LARGE SCALE ANALYSIS] AT THR-137</scope>
    <scope>IDENTIFICATION BY MASS SPECTROMETRY [LARGE SCALE ANALYSIS]</scope>
    <source>
        <tissue>Brain</tissue>
        <tissue>Brown adipose tissue</tissue>
        <tissue>Kidney</tissue>
        <tissue>Liver</tissue>
        <tissue>Lung</tissue>
        <tissue>Pancreas</tissue>
        <tissue>Spleen</tissue>
        <tissue>Testis</tissue>
    </source>
</reference>
<comment type="alternative products">
    <event type="alternative splicing"/>
    <isoform>
        <id>Q9CR29-1</id>
        <name>1</name>
        <sequence type="displayed"/>
    </isoform>
    <isoform>
        <id>Q9CR29-2</id>
        <name>2</name>
        <sequence type="described" ref="VSP_018336 VSP_018337"/>
    </isoform>
</comment>
<comment type="similarity">
    <text evidence="5">Belongs to the CCDC43 family.</text>
</comment>
<name>CCD43_MOUSE</name>
<dbReference type="EMBL" id="AK009319">
    <property type="protein sequence ID" value="BAB26213.1"/>
    <property type="molecule type" value="mRNA"/>
</dbReference>
<dbReference type="EMBL" id="AK028834">
    <property type="protein sequence ID" value="BAC26145.1"/>
    <property type="molecule type" value="mRNA"/>
</dbReference>
<dbReference type="EMBL" id="AK011254">
    <property type="protein sequence ID" value="BAB27496.1"/>
    <property type="molecule type" value="mRNA"/>
</dbReference>
<dbReference type="EMBL" id="AK166820">
    <property type="protein sequence ID" value="BAE39046.1"/>
    <property type="molecule type" value="mRNA"/>
</dbReference>
<dbReference type="EMBL" id="BC058520">
    <property type="protein sequence ID" value="AAH58520.1"/>
    <property type="molecule type" value="mRNA"/>
</dbReference>
<dbReference type="EMBL" id="BC061076">
    <property type="protein sequence ID" value="AAH61076.1"/>
    <property type="molecule type" value="mRNA"/>
</dbReference>
<dbReference type="CCDS" id="CCDS25502.1">
    <molecule id="Q9CR29-1"/>
</dbReference>
<dbReference type="RefSeq" id="NP_080194.1">
    <molecule id="Q9CR29-1"/>
    <property type="nucleotide sequence ID" value="NM_025918.3"/>
</dbReference>
<dbReference type="SMR" id="Q9CR29"/>
<dbReference type="BioGRID" id="206753">
    <property type="interactions" value="4"/>
</dbReference>
<dbReference type="FunCoup" id="Q9CR29">
    <property type="interactions" value="1643"/>
</dbReference>
<dbReference type="STRING" id="10090.ENSMUSP00000090230"/>
<dbReference type="ChEMBL" id="CHEMBL4879507"/>
<dbReference type="GlyGen" id="Q9CR29">
    <property type="glycosylation" value="1 site, 1 N-linked glycan (1 site)"/>
</dbReference>
<dbReference type="iPTMnet" id="Q9CR29"/>
<dbReference type="PhosphoSitePlus" id="Q9CR29"/>
<dbReference type="jPOST" id="Q9CR29"/>
<dbReference type="PaxDb" id="10090-ENSMUSP00000090230"/>
<dbReference type="PeptideAtlas" id="Q9CR29"/>
<dbReference type="ProteomicsDB" id="281498">
    <molecule id="Q9CR29-1"/>
</dbReference>
<dbReference type="ProteomicsDB" id="281499">
    <molecule id="Q9CR29-2"/>
</dbReference>
<dbReference type="Pumba" id="Q9CR29"/>
<dbReference type="Antibodypedia" id="8262">
    <property type="antibodies" value="75 antibodies from 14 providers"/>
</dbReference>
<dbReference type="DNASU" id="52715"/>
<dbReference type="Ensembl" id="ENSMUST00000092569.13">
    <molecule id="Q9CR29-1"/>
    <property type="protein sequence ID" value="ENSMUSP00000090230.7"/>
    <property type="gene ID" value="ENSMUSG00000020925.18"/>
</dbReference>
<dbReference type="GeneID" id="52715"/>
<dbReference type="KEGG" id="mmu:52715"/>
<dbReference type="UCSC" id="uc007lsg.1">
    <molecule id="Q9CR29-1"/>
    <property type="organism name" value="mouse"/>
</dbReference>
<dbReference type="AGR" id="MGI:1289318"/>
<dbReference type="CTD" id="124808"/>
<dbReference type="MGI" id="MGI:1289318">
    <property type="gene designation" value="Ccdc43"/>
</dbReference>
<dbReference type="VEuPathDB" id="HostDB:ENSMUSG00000020925"/>
<dbReference type="eggNOG" id="ENOG502RYDM">
    <property type="taxonomic scope" value="Eukaryota"/>
</dbReference>
<dbReference type="GeneTree" id="ENSGT00390000015009"/>
<dbReference type="HOGENOM" id="CLU_079381_1_0_1"/>
<dbReference type="InParanoid" id="Q9CR29"/>
<dbReference type="OMA" id="KFLFRNT"/>
<dbReference type="OrthoDB" id="2187466at2759"/>
<dbReference type="PhylomeDB" id="Q9CR29"/>
<dbReference type="TreeFam" id="TF324859"/>
<dbReference type="BioGRID-ORCS" id="52715">
    <property type="hits" value="5 hits in 77 CRISPR screens"/>
</dbReference>
<dbReference type="PRO" id="PR:Q9CR29"/>
<dbReference type="Proteomes" id="UP000000589">
    <property type="component" value="Chromosome 11"/>
</dbReference>
<dbReference type="RNAct" id="Q9CR29">
    <property type="molecule type" value="protein"/>
</dbReference>
<dbReference type="Bgee" id="ENSMUSG00000020925">
    <property type="expression patterns" value="Expressed in muscle of arm and 255 other cell types or tissues"/>
</dbReference>
<dbReference type="ExpressionAtlas" id="Q9CR29">
    <property type="expression patterns" value="baseline and differential"/>
</dbReference>
<dbReference type="GO" id="GO:0005829">
    <property type="term" value="C:cytosol"/>
    <property type="evidence" value="ECO:0007669"/>
    <property type="project" value="Ensembl"/>
</dbReference>
<dbReference type="InterPro" id="IPR037666">
    <property type="entry name" value="CCDC43"/>
</dbReference>
<dbReference type="PANTHER" id="PTHR31684">
    <property type="entry name" value="COILED-COIL DOMAIN-CONTAINING PROTEIN 43"/>
    <property type="match status" value="1"/>
</dbReference>
<dbReference type="PANTHER" id="PTHR31684:SF2">
    <property type="entry name" value="COILED-COIL DOMAIN-CONTAINING PROTEIN 43"/>
    <property type="match status" value="1"/>
</dbReference>
<protein>
    <recommendedName>
        <fullName>Coiled-coil domain-containing protein 43</fullName>
    </recommendedName>
</protein>
<proteinExistence type="evidence at protein level"/>